<name>SELO_CLOBA</name>
<comment type="function">
    <text evidence="1">Nucleotidyltransferase involved in the post-translational modification of proteins. It can catalyze the addition of adenosine monophosphate (AMP) or uridine monophosphate (UMP) to a protein, resulting in modifications known as AMPylation and UMPylation.</text>
</comment>
<comment type="catalytic activity">
    <reaction evidence="1">
        <text>L-seryl-[protein] + ATP = 3-O-(5'-adenylyl)-L-seryl-[protein] + diphosphate</text>
        <dbReference type="Rhea" id="RHEA:58120"/>
        <dbReference type="Rhea" id="RHEA-COMP:9863"/>
        <dbReference type="Rhea" id="RHEA-COMP:15073"/>
        <dbReference type="ChEBI" id="CHEBI:29999"/>
        <dbReference type="ChEBI" id="CHEBI:30616"/>
        <dbReference type="ChEBI" id="CHEBI:33019"/>
        <dbReference type="ChEBI" id="CHEBI:142516"/>
        <dbReference type="EC" id="2.7.7.108"/>
    </reaction>
</comment>
<comment type="catalytic activity">
    <reaction evidence="1">
        <text>L-threonyl-[protein] + ATP = 3-O-(5'-adenylyl)-L-threonyl-[protein] + diphosphate</text>
        <dbReference type="Rhea" id="RHEA:54292"/>
        <dbReference type="Rhea" id="RHEA-COMP:11060"/>
        <dbReference type="Rhea" id="RHEA-COMP:13847"/>
        <dbReference type="ChEBI" id="CHEBI:30013"/>
        <dbReference type="ChEBI" id="CHEBI:30616"/>
        <dbReference type="ChEBI" id="CHEBI:33019"/>
        <dbReference type="ChEBI" id="CHEBI:138113"/>
        <dbReference type="EC" id="2.7.7.108"/>
    </reaction>
</comment>
<comment type="catalytic activity">
    <reaction evidence="1">
        <text>L-tyrosyl-[protein] + ATP = O-(5'-adenylyl)-L-tyrosyl-[protein] + diphosphate</text>
        <dbReference type="Rhea" id="RHEA:54288"/>
        <dbReference type="Rhea" id="RHEA-COMP:10136"/>
        <dbReference type="Rhea" id="RHEA-COMP:13846"/>
        <dbReference type="ChEBI" id="CHEBI:30616"/>
        <dbReference type="ChEBI" id="CHEBI:33019"/>
        <dbReference type="ChEBI" id="CHEBI:46858"/>
        <dbReference type="ChEBI" id="CHEBI:83624"/>
        <dbReference type="EC" id="2.7.7.108"/>
    </reaction>
</comment>
<comment type="catalytic activity">
    <reaction evidence="1">
        <text>L-histidyl-[protein] + UTP = N(tele)-(5'-uridylyl)-L-histidyl-[protein] + diphosphate</text>
        <dbReference type="Rhea" id="RHEA:83891"/>
        <dbReference type="Rhea" id="RHEA-COMP:9745"/>
        <dbReference type="Rhea" id="RHEA-COMP:20239"/>
        <dbReference type="ChEBI" id="CHEBI:29979"/>
        <dbReference type="ChEBI" id="CHEBI:33019"/>
        <dbReference type="ChEBI" id="CHEBI:46398"/>
        <dbReference type="ChEBI" id="CHEBI:233474"/>
    </reaction>
</comment>
<comment type="catalytic activity">
    <reaction evidence="1">
        <text>L-seryl-[protein] + UTP = O-(5'-uridylyl)-L-seryl-[protein] + diphosphate</text>
        <dbReference type="Rhea" id="RHEA:64604"/>
        <dbReference type="Rhea" id="RHEA-COMP:9863"/>
        <dbReference type="Rhea" id="RHEA-COMP:16635"/>
        <dbReference type="ChEBI" id="CHEBI:29999"/>
        <dbReference type="ChEBI" id="CHEBI:33019"/>
        <dbReference type="ChEBI" id="CHEBI:46398"/>
        <dbReference type="ChEBI" id="CHEBI:156051"/>
    </reaction>
</comment>
<comment type="catalytic activity">
    <reaction evidence="1">
        <text>L-tyrosyl-[protein] + UTP = O-(5'-uridylyl)-L-tyrosyl-[protein] + diphosphate</text>
        <dbReference type="Rhea" id="RHEA:83887"/>
        <dbReference type="Rhea" id="RHEA-COMP:10136"/>
        <dbReference type="Rhea" id="RHEA-COMP:20238"/>
        <dbReference type="ChEBI" id="CHEBI:33019"/>
        <dbReference type="ChEBI" id="CHEBI:46398"/>
        <dbReference type="ChEBI" id="CHEBI:46858"/>
        <dbReference type="ChEBI" id="CHEBI:90602"/>
    </reaction>
</comment>
<comment type="cofactor">
    <cofactor evidence="1">
        <name>Mg(2+)</name>
        <dbReference type="ChEBI" id="CHEBI:18420"/>
    </cofactor>
    <cofactor evidence="1">
        <name>Mn(2+)</name>
        <dbReference type="ChEBI" id="CHEBI:29035"/>
    </cofactor>
</comment>
<comment type="similarity">
    <text evidence="1">Belongs to the SELO family.</text>
</comment>
<sequence length="491" mass="55457">MKNKEIIINNYLNLENNYIKLPKKLFSEQNPSEVPSTNLVVFNESLASDLGLSEEFLQSDDGINFLSGNKILEDTIPIAQAYAGHQFGHFTMLGDGRAILLGELKSQNGERFDIQLKGSGRTPYSRGGDGKATLGAMLREYIISEGMHGLGIPTTRSLAVVSTGEDVIREEILKGAVLTRIAKSHIRVGTFQFISNYGTIEELKALADYTLNRHLKKAEYEGNPYIYLLNEVIKSQAKLISKWQLVGFVHGVMNTDNVTISGETIDYGPCAFMDVYDPDTVFSSIDINGRYAYGNQPKIGVWNLARFAETLLPLLDEDLESAVEIAQNSISKYSDLYNKYWYTGMRAKLGIFNEKEEDKELIQSLLTMMKRFKADYTNTFSNLTLGNLSDIDMFASKEFKMWYEVWKERLKSQNQSSEESKMLMEKSNPTIIPRNNRVEEALVAAIKDSDYSVMQSLLDVLKNPYDYSSINEYYSIVPKSTSCTYKTYCGT</sequence>
<evidence type="ECO:0000255" key="1">
    <source>
        <dbReference type="HAMAP-Rule" id="MF_00692"/>
    </source>
</evidence>
<organism>
    <name type="scientific">Clostridium botulinum (strain Alaska E43 / Type E3)</name>
    <dbReference type="NCBI Taxonomy" id="508767"/>
    <lineage>
        <taxon>Bacteria</taxon>
        <taxon>Bacillati</taxon>
        <taxon>Bacillota</taxon>
        <taxon>Clostridia</taxon>
        <taxon>Eubacteriales</taxon>
        <taxon>Clostridiaceae</taxon>
        <taxon>Clostridium</taxon>
    </lineage>
</organism>
<dbReference type="EC" id="2.7.7.-" evidence="1"/>
<dbReference type="EC" id="2.7.7.108" evidence="1"/>
<dbReference type="EMBL" id="CP001078">
    <property type="protein sequence ID" value="ACD51278.1"/>
    <property type="molecule type" value="Genomic_DNA"/>
</dbReference>
<dbReference type="RefSeq" id="WP_012449672.1">
    <property type="nucleotide sequence ID" value="NC_010723.1"/>
</dbReference>
<dbReference type="SMR" id="B2V536"/>
<dbReference type="KEGG" id="cbt:CLH_1334"/>
<dbReference type="HOGENOM" id="CLU_010245_4_1_9"/>
<dbReference type="GO" id="GO:0070733">
    <property type="term" value="F:AMPylase activity"/>
    <property type="evidence" value="ECO:0007669"/>
    <property type="project" value="RHEA"/>
</dbReference>
<dbReference type="GO" id="GO:0005524">
    <property type="term" value="F:ATP binding"/>
    <property type="evidence" value="ECO:0007669"/>
    <property type="project" value="UniProtKB-UniRule"/>
</dbReference>
<dbReference type="GO" id="GO:0000287">
    <property type="term" value="F:magnesium ion binding"/>
    <property type="evidence" value="ECO:0007669"/>
    <property type="project" value="UniProtKB-UniRule"/>
</dbReference>
<dbReference type="HAMAP" id="MF_00692">
    <property type="entry name" value="YdiU_SelO"/>
    <property type="match status" value="1"/>
</dbReference>
<dbReference type="InterPro" id="IPR003846">
    <property type="entry name" value="SelO"/>
</dbReference>
<dbReference type="NCBIfam" id="NF000658">
    <property type="entry name" value="PRK00029.1"/>
    <property type="match status" value="1"/>
</dbReference>
<dbReference type="PANTHER" id="PTHR32057">
    <property type="entry name" value="PROTEIN ADENYLYLTRANSFERASE SELO, MITOCHONDRIAL"/>
    <property type="match status" value="1"/>
</dbReference>
<dbReference type="PANTHER" id="PTHR32057:SF14">
    <property type="entry name" value="PROTEIN ADENYLYLTRANSFERASE SELO, MITOCHONDRIAL"/>
    <property type="match status" value="1"/>
</dbReference>
<dbReference type="Pfam" id="PF02696">
    <property type="entry name" value="SelO"/>
    <property type="match status" value="1"/>
</dbReference>
<proteinExistence type="inferred from homology"/>
<protein>
    <recommendedName>
        <fullName evidence="1">Protein nucleotidyltransferase YdiU</fullName>
        <ecNumber evidence="1">2.7.7.-</ecNumber>
    </recommendedName>
    <alternativeName>
        <fullName evidence="1">Protein adenylyltransferase YdiU</fullName>
        <ecNumber evidence="1">2.7.7.108</ecNumber>
    </alternativeName>
    <alternativeName>
        <fullName evidence="1">Protein uridylyltransferase YdiU</fullName>
        <ecNumber evidence="1">2.7.7.-</ecNumber>
    </alternativeName>
</protein>
<feature type="chain" id="PRO_1000132099" description="Protein nucleotidyltransferase YdiU">
    <location>
        <begin position="1"/>
        <end position="491"/>
    </location>
</feature>
<feature type="active site" description="Proton acceptor" evidence="1">
    <location>
        <position position="256"/>
    </location>
</feature>
<feature type="binding site" evidence="1">
    <location>
        <position position="94"/>
    </location>
    <ligand>
        <name>ATP</name>
        <dbReference type="ChEBI" id="CHEBI:30616"/>
    </ligand>
</feature>
<feature type="binding site" evidence="1">
    <location>
        <position position="96"/>
    </location>
    <ligand>
        <name>ATP</name>
        <dbReference type="ChEBI" id="CHEBI:30616"/>
    </ligand>
</feature>
<feature type="binding site" evidence="1">
    <location>
        <position position="97"/>
    </location>
    <ligand>
        <name>ATP</name>
        <dbReference type="ChEBI" id="CHEBI:30616"/>
    </ligand>
</feature>
<feature type="binding site" evidence="1">
    <location>
        <position position="117"/>
    </location>
    <ligand>
        <name>ATP</name>
        <dbReference type="ChEBI" id="CHEBI:30616"/>
    </ligand>
</feature>
<feature type="binding site" evidence="1">
    <location>
        <position position="129"/>
    </location>
    <ligand>
        <name>ATP</name>
        <dbReference type="ChEBI" id="CHEBI:30616"/>
    </ligand>
</feature>
<feature type="binding site" evidence="1">
    <location>
        <position position="130"/>
    </location>
    <ligand>
        <name>ATP</name>
        <dbReference type="ChEBI" id="CHEBI:30616"/>
    </ligand>
</feature>
<feature type="binding site" evidence="1">
    <location>
        <position position="180"/>
    </location>
    <ligand>
        <name>ATP</name>
        <dbReference type="ChEBI" id="CHEBI:30616"/>
    </ligand>
</feature>
<feature type="binding site" evidence="1">
    <location>
        <position position="187"/>
    </location>
    <ligand>
        <name>ATP</name>
        <dbReference type="ChEBI" id="CHEBI:30616"/>
    </ligand>
</feature>
<feature type="binding site" evidence="1">
    <location>
        <position position="257"/>
    </location>
    <ligand>
        <name>Mg(2+)</name>
        <dbReference type="ChEBI" id="CHEBI:18420"/>
    </ligand>
</feature>
<feature type="binding site" evidence="1">
    <location>
        <position position="266"/>
    </location>
    <ligand>
        <name>ATP</name>
        <dbReference type="ChEBI" id="CHEBI:30616"/>
    </ligand>
</feature>
<feature type="binding site" evidence="1">
    <location>
        <position position="266"/>
    </location>
    <ligand>
        <name>Mg(2+)</name>
        <dbReference type="ChEBI" id="CHEBI:18420"/>
    </ligand>
</feature>
<accession>B2V536</accession>
<reference key="1">
    <citation type="submission" date="2008-05" db="EMBL/GenBank/DDBJ databases">
        <title>Complete genome sequence of Clostridium botulinum E3 str. Alaska E43.</title>
        <authorList>
            <person name="Brinkac L.M."/>
            <person name="Brown J.L."/>
            <person name="Bruce D."/>
            <person name="Detter C."/>
            <person name="Munk C."/>
            <person name="Smith L.A."/>
            <person name="Smith T.J."/>
            <person name="Sutton G."/>
            <person name="Brettin T.S."/>
        </authorList>
    </citation>
    <scope>NUCLEOTIDE SEQUENCE [LARGE SCALE GENOMIC DNA]</scope>
    <source>
        <strain>Alaska E43 / Type E3</strain>
    </source>
</reference>
<gene>
    <name evidence="1" type="primary">ydiU</name>
    <name evidence="1" type="synonym">selO</name>
    <name type="ordered locus">CLH_1334</name>
</gene>
<keyword id="KW-0067">ATP-binding</keyword>
<keyword id="KW-0460">Magnesium</keyword>
<keyword id="KW-0464">Manganese</keyword>
<keyword id="KW-0479">Metal-binding</keyword>
<keyword id="KW-0547">Nucleotide-binding</keyword>
<keyword id="KW-0548">Nucleotidyltransferase</keyword>
<keyword id="KW-0808">Transferase</keyword>